<accession>Q8HVM4</accession>
<geneLocation type="chloroplast"/>
<feature type="chain" id="PRO_0000250838" description="NAD(P)H-quinone oxidoreductase subunit I, chloroplastic">
    <location>
        <begin position="1"/>
        <end position="166"/>
    </location>
</feature>
<feature type="domain" description="4Fe-4S ferredoxin-type 1" evidence="1">
    <location>
        <begin position="55"/>
        <end position="84"/>
    </location>
</feature>
<feature type="domain" description="4Fe-4S ferredoxin-type 2" evidence="1">
    <location>
        <begin position="95"/>
        <end position="124"/>
    </location>
</feature>
<feature type="binding site" evidence="1">
    <location>
        <position position="64"/>
    </location>
    <ligand>
        <name>[4Fe-4S] cluster</name>
        <dbReference type="ChEBI" id="CHEBI:49883"/>
        <label>1</label>
    </ligand>
</feature>
<feature type="binding site" evidence="1">
    <location>
        <position position="67"/>
    </location>
    <ligand>
        <name>[4Fe-4S] cluster</name>
        <dbReference type="ChEBI" id="CHEBI:49883"/>
        <label>1</label>
    </ligand>
</feature>
<feature type="binding site" evidence="1">
    <location>
        <position position="70"/>
    </location>
    <ligand>
        <name>[4Fe-4S] cluster</name>
        <dbReference type="ChEBI" id="CHEBI:49883"/>
        <label>1</label>
    </ligand>
</feature>
<feature type="binding site" evidence="1">
    <location>
        <position position="74"/>
    </location>
    <ligand>
        <name>[4Fe-4S] cluster</name>
        <dbReference type="ChEBI" id="CHEBI:49883"/>
        <label>2</label>
    </ligand>
</feature>
<feature type="binding site" evidence="1">
    <location>
        <position position="104"/>
    </location>
    <ligand>
        <name>[4Fe-4S] cluster</name>
        <dbReference type="ChEBI" id="CHEBI:49883"/>
        <label>2</label>
    </ligand>
</feature>
<feature type="binding site" evidence="1">
    <location>
        <position position="107"/>
    </location>
    <ligand>
        <name>[4Fe-4S] cluster</name>
        <dbReference type="ChEBI" id="CHEBI:49883"/>
        <label>2</label>
    </ligand>
</feature>
<feature type="binding site" evidence="1">
    <location>
        <position position="110"/>
    </location>
    <ligand>
        <name>[4Fe-4S] cluster</name>
        <dbReference type="ChEBI" id="CHEBI:49883"/>
        <label>2</label>
    </ligand>
</feature>
<feature type="binding site" evidence="1">
    <location>
        <position position="114"/>
    </location>
    <ligand>
        <name>[4Fe-4S] cluster</name>
        <dbReference type="ChEBI" id="CHEBI:49883"/>
        <label>1</label>
    </ligand>
</feature>
<protein>
    <recommendedName>
        <fullName evidence="1">NAD(P)H-quinone oxidoreductase subunit I, chloroplastic</fullName>
        <ecNumber evidence="1">7.1.1.-</ecNumber>
    </recommendedName>
    <alternativeName>
        <fullName evidence="1">NAD(P)H dehydrogenase subunit I</fullName>
        <shortName evidence="1">NDH subunit I</shortName>
    </alternativeName>
    <alternativeName>
        <fullName evidence="1">NADH-plastoquinone oxidoreductase subunit I</fullName>
    </alternativeName>
</protein>
<comment type="function">
    <text evidence="1">NDH shuttles electrons from NAD(P)H:plastoquinone, via FMN and iron-sulfur (Fe-S) centers, to quinones in the photosynthetic chain and possibly in a chloroplast respiratory chain. The immediate electron acceptor for the enzyme in this species is believed to be plastoquinone. Couples the redox reaction to proton translocation, and thus conserves the redox energy in a proton gradient.</text>
</comment>
<comment type="catalytic activity">
    <reaction evidence="1">
        <text>a plastoquinone + NADH + (n+1) H(+)(in) = a plastoquinol + NAD(+) + n H(+)(out)</text>
        <dbReference type="Rhea" id="RHEA:42608"/>
        <dbReference type="Rhea" id="RHEA-COMP:9561"/>
        <dbReference type="Rhea" id="RHEA-COMP:9562"/>
        <dbReference type="ChEBI" id="CHEBI:15378"/>
        <dbReference type="ChEBI" id="CHEBI:17757"/>
        <dbReference type="ChEBI" id="CHEBI:57540"/>
        <dbReference type="ChEBI" id="CHEBI:57945"/>
        <dbReference type="ChEBI" id="CHEBI:62192"/>
    </reaction>
</comment>
<comment type="catalytic activity">
    <reaction evidence="1">
        <text>a plastoquinone + NADPH + (n+1) H(+)(in) = a plastoquinol + NADP(+) + n H(+)(out)</text>
        <dbReference type="Rhea" id="RHEA:42612"/>
        <dbReference type="Rhea" id="RHEA-COMP:9561"/>
        <dbReference type="Rhea" id="RHEA-COMP:9562"/>
        <dbReference type="ChEBI" id="CHEBI:15378"/>
        <dbReference type="ChEBI" id="CHEBI:17757"/>
        <dbReference type="ChEBI" id="CHEBI:57783"/>
        <dbReference type="ChEBI" id="CHEBI:58349"/>
        <dbReference type="ChEBI" id="CHEBI:62192"/>
    </reaction>
</comment>
<comment type="cofactor">
    <cofactor evidence="1">
        <name>[4Fe-4S] cluster</name>
        <dbReference type="ChEBI" id="CHEBI:49883"/>
    </cofactor>
    <text evidence="1">Binds 2 [4Fe-4S] clusters per subunit.</text>
</comment>
<comment type="subunit">
    <text evidence="1">NDH is composed of at least 16 different subunits, 5 of which are encoded in the nucleus.</text>
</comment>
<comment type="subcellular location">
    <subcellularLocation>
        <location evidence="1">Plastid</location>
        <location evidence="1">Chloroplast thylakoid membrane</location>
        <topology evidence="1">Peripheral membrane protein</topology>
    </subcellularLocation>
</comment>
<comment type="similarity">
    <text evidence="1">Belongs to the complex I 23 kDa subunit family.</text>
</comment>
<dbReference type="EC" id="7.1.1.-" evidence="1"/>
<dbReference type="EMBL" id="AF383839">
    <property type="protein sequence ID" value="AAN61780.1"/>
    <property type="molecule type" value="Genomic_DNA"/>
</dbReference>
<dbReference type="SMR" id="Q8HVM4"/>
<dbReference type="GO" id="GO:0009535">
    <property type="term" value="C:chloroplast thylakoid membrane"/>
    <property type="evidence" value="ECO:0007669"/>
    <property type="project" value="UniProtKB-SubCell"/>
</dbReference>
<dbReference type="GO" id="GO:0051539">
    <property type="term" value="F:4 iron, 4 sulfur cluster binding"/>
    <property type="evidence" value="ECO:0007669"/>
    <property type="project" value="UniProtKB-KW"/>
</dbReference>
<dbReference type="GO" id="GO:0005506">
    <property type="term" value="F:iron ion binding"/>
    <property type="evidence" value="ECO:0007669"/>
    <property type="project" value="UniProtKB-UniRule"/>
</dbReference>
<dbReference type="GO" id="GO:0008137">
    <property type="term" value="F:NADH dehydrogenase (ubiquinone) activity"/>
    <property type="evidence" value="ECO:0007669"/>
    <property type="project" value="InterPro"/>
</dbReference>
<dbReference type="GO" id="GO:0048038">
    <property type="term" value="F:quinone binding"/>
    <property type="evidence" value="ECO:0007669"/>
    <property type="project" value="UniProtKB-KW"/>
</dbReference>
<dbReference type="GO" id="GO:0019684">
    <property type="term" value="P:photosynthesis, light reaction"/>
    <property type="evidence" value="ECO:0007669"/>
    <property type="project" value="UniProtKB-UniRule"/>
</dbReference>
<dbReference type="FunFam" id="3.30.70.3270:FF:000006">
    <property type="entry name" value="NAD(P)H-quinone oxidoreductase subunit I, chloroplastic"/>
    <property type="match status" value="1"/>
</dbReference>
<dbReference type="Gene3D" id="3.30.70.3270">
    <property type="match status" value="1"/>
</dbReference>
<dbReference type="HAMAP" id="MF_01351">
    <property type="entry name" value="NDH1_NuoI"/>
    <property type="match status" value="1"/>
</dbReference>
<dbReference type="InterPro" id="IPR017896">
    <property type="entry name" value="4Fe4S_Fe-S-bd"/>
</dbReference>
<dbReference type="InterPro" id="IPR017900">
    <property type="entry name" value="4Fe4S_Fe_S_CS"/>
</dbReference>
<dbReference type="InterPro" id="IPR010226">
    <property type="entry name" value="NADH_quinone_OxRdtase_chainI"/>
</dbReference>
<dbReference type="InterPro" id="IPR004497">
    <property type="entry name" value="NDHI"/>
</dbReference>
<dbReference type="NCBIfam" id="TIGR00403">
    <property type="entry name" value="ndhI"/>
    <property type="match status" value="1"/>
</dbReference>
<dbReference type="NCBIfam" id="TIGR01971">
    <property type="entry name" value="NuoI"/>
    <property type="match status" value="1"/>
</dbReference>
<dbReference type="NCBIfam" id="NF004537">
    <property type="entry name" value="PRK05888.1-3"/>
    <property type="match status" value="1"/>
</dbReference>
<dbReference type="PANTHER" id="PTHR47275">
    <property type="entry name" value="NAD(P)H-QUINONE OXIDOREDUCTASE SUBUNIT I, CHLOROPLASTIC"/>
    <property type="match status" value="1"/>
</dbReference>
<dbReference type="PANTHER" id="PTHR47275:SF1">
    <property type="entry name" value="NAD(P)H-QUINONE OXIDOREDUCTASE SUBUNIT I, CHLOROPLASTIC"/>
    <property type="match status" value="1"/>
</dbReference>
<dbReference type="Pfam" id="PF00037">
    <property type="entry name" value="Fer4"/>
    <property type="match status" value="2"/>
</dbReference>
<dbReference type="SUPFAM" id="SSF54862">
    <property type="entry name" value="4Fe-4S ferredoxins"/>
    <property type="match status" value="1"/>
</dbReference>
<dbReference type="PROSITE" id="PS00198">
    <property type="entry name" value="4FE4S_FER_1"/>
    <property type="match status" value="2"/>
</dbReference>
<dbReference type="PROSITE" id="PS51379">
    <property type="entry name" value="4FE4S_FER_2"/>
    <property type="match status" value="2"/>
</dbReference>
<gene>
    <name evidence="1" type="primary">ndhI</name>
</gene>
<name>NDHI_PSAAN</name>
<sequence length="166" mass="19461">MFPMVTEFMNYGQQTVRAARYIGQGFMITLSHANRLPVTIQYPYEKLITSERFRGRIHFEFDKCIACEVCVRVCPIDLPVVDWKLETDIRKKRLLNYSIDFGICIFCGNCVEYCPTNCLSMTEEYELSTYDRHELNYNQIALGRLPMSVIDDYTIRTILNLPEIKT</sequence>
<keyword id="KW-0004">4Fe-4S</keyword>
<keyword id="KW-0150">Chloroplast</keyword>
<keyword id="KW-0408">Iron</keyword>
<keyword id="KW-0411">Iron-sulfur</keyword>
<keyword id="KW-0472">Membrane</keyword>
<keyword id="KW-0479">Metal-binding</keyword>
<keyword id="KW-0520">NAD</keyword>
<keyword id="KW-0521">NADP</keyword>
<keyword id="KW-0934">Plastid</keyword>
<keyword id="KW-0618">Plastoquinone</keyword>
<keyword id="KW-0874">Quinone</keyword>
<keyword id="KW-0677">Repeat</keyword>
<keyword id="KW-0793">Thylakoid</keyword>
<keyword id="KW-1278">Translocase</keyword>
<reference key="1">
    <citation type="submission" date="2003-01" db="EMBL/GenBank/DDBJ databases">
        <title>Chloroplast DNA phylogeny of tribe Heliantheae (Asteraceae).</title>
        <authorList>
            <person name="Panero J.L."/>
            <person name="Baldwin B.G."/>
            <person name="Schilling E.E."/>
            <person name="Clevinger J.A."/>
        </authorList>
    </citation>
    <scope>NUCLEOTIDE SEQUENCE [GENOMIC DNA]</scope>
</reference>
<proteinExistence type="inferred from homology"/>
<evidence type="ECO:0000255" key="1">
    <source>
        <dbReference type="HAMAP-Rule" id="MF_01351"/>
    </source>
</evidence>
<organism>
    <name type="scientific">Psathyrotes annua</name>
    <name type="common">Annual psathyrotes</name>
    <name type="synonym">Bulbostylis annua</name>
    <dbReference type="NCBI Taxonomy" id="128726"/>
    <lineage>
        <taxon>Eukaryota</taxon>
        <taxon>Viridiplantae</taxon>
        <taxon>Streptophyta</taxon>
        <taxon>Embryophyta</taxon>
        <taxon>Tracheophyta</taxon>
        <taxon>Spermatophyta</taxon>
        <taxon>Magnoliopsida</taxon>
        <taxon>eudicotyledons</taxon>
        <taxon>Gunneridae</taxon>
        <taxon>Pentapetalae</taxon>
        <taxon>asterids</taxon>
        <taxon>campanulids</taxon>
        <taxon>Asterales</taxon>
        <taxon>Asteraceae</taxon>
        <taxon>Asteroideae</taxon>
        <taxon>Heliantheae alliance</taxon>
        <taxon>Helenieae</taxon>
        <taxon>Psathyrotinae</taxon>
        <taxon>Psathyrotes</taxon>
    </lineage>
</organism>